<proteinExistence type="evidence at protein level"/>
<feature type="initiator methionine" description="Removed; by host" evidence="3">
    <location>
        <position position="1"/>
    </location>
</feature>
<feature type="chain" id="PRO_0000426311" description="Genome polyprotein">
    <location>
        <begin position="2"/>
        <end position="2183"/>
    </location>
</feature>
<feature type="chain" id="PRO_0000426312" description="P1">
    <location>
        <begin position="2"/>
        <end position="849"/>
    </location>
</feature>
<feature type="chain" id="PRO_0000426313" description="Capsid protein VP0">
    <location>
        <begin position="2"/>
        <end position="330"/>
    </location>
</feature>
<feature type="chain" id="PRO_0000426314" description="Capsid protein VP4">
    <location>
        <begin position="2"/>
        <end position="69"/>
    </location>
</feature>
<feature type="chain" id="PRO_0000426315" description="Capsid protein VP2">
    <location>
        <begin position="70"/>
        <end position="330"/>
    </location>
</feature>
<feature type="chain" id="PRO_0000426316" description="Capsid protein VP3">
    <location>
        <begin position="331"/>
        <end position="568"/>
    </location>
</feature>
<feature type="chain" id="PRO_0000426317" description="Capsid protein VP1">
    <location>
        <begin position="569"/>
        <end position="849"/>
    </location>
</feature>
<feature type="chain" id="PRO_0000426318" description="P2">
    <location>
        <begin position="850"/>
        <end position="1427"/>
    </location>
</feature>
<feature type="chain" id="PRO_0000426319" description="Protease 2A">
    <location>
        <begin position="850"/>
        <end position="999"/>
    </location>
</feature>
<feature type="chain" id="PRO_0000039620" description="Protein 2B">
    <location>
        <begin position="1000"/>
        <end position="1098"/>
    </location>
</feature>
<feature type="chain" id="PRO_0000039621" description="Protein 2C">
    <location>
        <begin position="1099"/>
        <end position="1427"/>
    </location>
</feature>
<feature type="chain" id="PRO_0000426320" description="P3" evidence="1">
    <location>
        <begin position="1428"/>
        <end position="2183"/>
    </location>
</feature>
<feature type="chain" id="PRO_0000426321" description="Protein 3AB">
    <location>
        <begin position="1428"/>
        <end position="1538"/>
    </location>
</feature>
<feature type="chain" id="PRO_0000039622" description="Protein 3A">
    <location>
        <begin position="1428"/>
        <end position="1516"/>
    </location>
</feature>
<feature type="chain" id="PRO_0000426322" description="Viral protein genome-linked">
    <location>
        <begin position="1517"/>
        <end position="1538"/>
    </location>
</feature>
<feature type="chain" id="PRO_0000426323" description="Protein 3CD">
    <location>
        <begin position="1539"/>
        <end position="2183"/>
    </location>
</feature>
<feature type="chain" id="PRO_0000426324" description="Protease 3C">
    <location>
        <begin position="1539"/>
        <end position="1721"/>
    </location>
</feature>
<feature type="chain" id="PRO_0000426325" description="RNA-directed RNA polymerase">
    <location>
        <begin position="1722"/>
        <end position="2183"/>
    </location>
</feature>
<feature type="topological domain" description="Cytoplasmic" evidence="10">
    <location>
        <begin position="2"/>
        <end position="1493"/>
    </location>
</feature>
<feature type="intramembrane region" evidence="10">
    <location>
        <begin position="1494"/>
        <end position="1509"/>
    </location>
</feature>
<feature type="topological domain" description="Cytoplasmic" evidence="10">
    <location>
        <begin position="1510"/>
        <end position="2183"/>
    </location>
</feature>
<feature type="domain" description="SF3 helicase" evidence="12">
    <location>
        <begin position="1203"/>
        <end position="1359"/>
    </location>
</feature>
<feature type="domain" description="Peptidase C3" evidence="13">
    <location>
        <begin position="1539"/>
        <end position="1717"/>
    </location>
</feature>
<feature type="domain" description="RdRp catalytic" evidence="11">
    <location>
        <begin position="1948"/>
        <end position="2064"/>
    </location>
</feature>
<feature type="zinc finger region" description="C4-type; degenerate" evidence="2">
    <location>
        <begin position="1367"/>
        <end position="1384"/>
    </location>
</feature>
<feature type="region of interest" description="Amphipathic alpha-helix" evidence="10">
    <location>
        <begin position="566"/>
        <end position="582"/>
    </location>
</feature>
<feature type="region of interest" description="Oligomerization" evidence="3">
    <location>
        <begin position="1099"/>
        <end position="1237"/>
    </location>
</feature>
<feature type="region of interest" description="Membrane-binding" evidence="3">
    <location>
        <begin position="1099"/>
        <end position="1171"/>
    </location>
</feature>
<feature type="region of interest" description="RNA-binding" evidence="3">
    <location>
        <begin position="1120"/>
        <end position="1124"/>
    </location>
</feature>
<feature type="region of interest" description="RNA-binding" evidence="3">
    <location>
        <begin position="1411"/>
        <end position="1418"/>
    </location>
</feature>
<feature type="region of interest" description="Oligomerization" evidence="3">
    <location>
        <begin position="1422"/>
        <end position="1427"/>
    </location>
</feature>
<feature type="active site" description="For protease 2A activity" evidence="3">
    <location>
        <position position="870"/>
    </location>
</feature>
<feature type="active site" description="For protease 2A activity" evidence="3">
    <location>
        <position position="888"/>
    </location>
</feature>
<feature type="active site" description="For protease 2A activity" evidence="3">
    <location>
        <position position="959"/>
    </location>
</feature>
<feature type="active site" description="For protease 3C activity" evidence="13">
    <location>
        <position position="1578"/>
    </location>
</feature>
<feature type="active site" description="For protease 3C activity" evidence="13">
    <location>
        <position position="1609"/>
    </location>
</feature>
<feature type="active site" description="For protease 3C activity" evidence="13">
    <location>
        <position position="1685"/>
    </location>
</feature>
<feature type="binding site" evidence="9">
    <location>
        <position position="905"/>
    </location>
    <ligand>
        <name>Zn(2+)</name>
        <dbReference type="ChEBI" id="CHEBI:29105"/>
        <label>1</label>
        <note>structural</note>
    </ligand>
</feature>
<feature type="binding site" evidence="9">
    <location>
        <position position="907"/>
    </location>
    <ligand>
        <name>Zn(2+)</name>
        <dbReference type="ChEBI" id="CHEBI:29105"/>
        <label>1</label>
        <note>structural</note>
    </ligand>
</feature>
<feature type="binding site" evidence="9">
    <location>
        <position position="965"/>
    </location>
    <ligand>
        <name>Zn(2+)</name>
        <dbReference type="ChEBI" id="CHEBI:29105"/>
        <label>1</label>
        <note>structural</note>
    </ligand>
</feature>
<feature type="binding site" evidence="9">
    <location>
        <position position="967"/>
    </location>
    <ligand>
        <name>Zn(2+)</name>
        <dbReference type="ChEBI" id="CHEBI:29105"/>
        <label>1</label>
        <note>structural</note>
    </ligand>
</feature>
<feature type="binding site" evidence="2">
    <location>
        <position position="1367"/>
    </location>
    <ligand>
        <name>Zn(2+)</name>
        <dbReference type="ChEBI" id="CHEBI:29105"/>
        <label>2</label>
    </ligand>
</feature>
<feature type="binding site" evidence="2">
    <location>
        <position position="1379"/>
    </location>
    <ligand>
        <name>Zn(2+)</name>
        <dbReference type="ChEBI" id="CHEBI:29105"/>
        <label>2</label>
    </ligand>
</feature>
<feature type="binding site" evidence="2">
    <location>
        <position position="1384"/>
    </location>
    <ligand>
        <name>Zn(2+)</name>
        <dbReference type="ChEBI" id="CHEBI:29105"/>
        <label>2</label>
    </ligand>
</feature>
<feature type="binding site" evidence="3">
    <location>
        <position position="1954"/>
    </location>
    <ligand>
        <name>Mg(2+)</name>
        <dbReference type="ChEBI" id="CHEBI:18420"/>
        <label>1</label>
        <note>catalytic; for RdRp activity</note>
    </ligand>
</feature>
<feature type="binding site" evidence="3">
    <location>
        <position position="1954"/>
    </location>
    <ligand>
        <name>Mg(2+)</name>
        <dbReference type="ChEBI" id="CHEBI:18420"/>
        <label>2</label>
        <note>catalytic; for RdRp activity</note>
    </ligand>
</feature>
<feature type="binding site" evidence="3">
    <location>
        <position position="2050"/>
    </location>
    <ligand>
        <name>Mg(2+)</name>
        <dbReference type="ChEBI" id="CHEBI:18420"/>
        <label>1</label>
        <note>catalytic; for RdRp activity</note>
    </ligand>
</feature>
<feature type="binding site" evidence="3">
    <location>
        <position position="2050"/>
    </location>
    <ligand>
        <name>Mg(2+)</name>
        <dbReference type="ChEBI" id="CHEBI:18420"/>
        <label>2</label>
        <note>catalytic; for RdRp activity</note>
    </ligand>
</feature>
<feature type="site" description="Cleavage; by autolysis" evidence="3">
    <location>
        <begin position="69"/>
        <end position="70"/>
    </location>
</feature>
<feature type="site" description="Cleavage; by protease 3C" evidence="4">
    <location>
        <begin position="330"/>
        <end position="331"/>
    </location>
</feature>
<feature type="site" description="Cleavage; by autolysis" evidence="4">
    <location>
        <begin position="849"/>
        <end position="850"/>
    </location>
</feature>
<feature type="site" description="Cleavage; by protease 3C" evidence="4">
    <location>
        <begin position="999"/>
        <end position="1000"/>
    </location>
</feature>
<feature type="site" description="Cleavage; by protease 3C" evidence="4">
    <location>
        <begin position="1098"/>
        <end position="1099"/>
    </location>
</feature>
<feature type="site" description="Involved in the interaction with host RTN3" evidence="8">
    <location>
        <position position="1123"/>
    </location>
</feature>
<feature type="site" description="Cleavage; by protease 3C" evidence="4">
    <location>
        <begin position="1427"/>
        <end position="1428"/>
    </location>
</feature>
<feature type="site" description="Cleavage; by protease 3C" evidence="4">
    <location>
        <begin position="1516"/>
        <end position="1517"/>
    </location>
</feature>
<feature type="site" description="Cleavage; by protease 3C" evidence="4">
    <location>
        <begin position="1538"/>
        <end position="1539"/>
    </location>
</feature>
<feature type="site" description="Cleavage; by protease 3C" evidence="4">
    <location>
        <begin position="1721"/>
        <end position="1722"/>
    </location>
</feature>
<feature type="modified residue" description="O-(5'-phospho-RNA)-tyrosine" evidence="3">
    <location>
        <position position="1519"/>
    </location>
</feature>
<feature type="lipid moiety-binding region" description="N-myristoyl glycine; by host" evidence="3">
    <location>
        <position position="2"/>
    </location>
</feature>
<feature type="strand" evidence="17">
    <location>
        <begin position="858"/>
        <end position="861"/>
    </location>
</feature>
<feature type="strand" evidence="17">
    <location>
        <begin position="864"/>
        <end position="868"/>
    </location>
</feature>
<feature type="helix" evidence="17">
    <location>
        <begin position="869"/>
        <end position="871"/>
    </location>
</feature>
<feature type="helix" evidence="17">
    <location>
        <begin position="874"/>
        <end position="878"/>
    </location>
</feature>
<feature type="strand" evidence="17">
    <location>
        <begin position="880"/>
        <end position="884"/>
    </location>
</feature>
<feature type="turn" evidence="17">
    <location>
        <begin position="885"/>
        <end position="888"/>
    </location>
</feature>
<feature type="strand" evidence="17">
    <location>
        <begin position="889"/>
        <end position="893"/>
    </location>
</feature>
<feature type="strand" evidence="17">
    <location>
        <begin position="908"/>
        <end position="914"/>
    </location>
</feature>
<feature type="turn" evidence="17">
    <location>
        <begin position="915"/>
        <end position="917"/>
    </location>
</feature>
<feature type="strand" evidence="17">
    <location>
        <begin position="919"/>
        <end position="924"/>
    </location>
</feature>
<feature type="strand" evidence="17">
    <location>
        <begin position="929"/>
        <end position="933"/>
    </location>
</feature>
<feature type="strand" evidence="17">
    <location>
        <begin position="941"/>
        <end position="951"/>
    </location>
</feature>
<feature type="strand" evidence="17">
    <location>
        <begin position="953"/>
        <end position="955"/>
    </location>
</feature>
<feature type="strand" evidence="17">
    <location>
        <begin position="960"/>
        <end position="964"/>
    </location>
</feature>
<feature type="strand" evidence="17">
    <location>
        <begin position="966"/>
        <end position="976"/>
    </location>
</feature>
<feature type="strand" evidence="17">
    <location>
        <begin position="978"/>
        <end position="986"/>
    </location>
</feature>
<keyword id="KW-0002">3D-structure</keyword>
<keyword id="KW-1072">Activation of host autophagy by virus</keyword>
<keyword id="KW-0067">ATP-binding</keyword>
<keyword id="KW-0068">Autocatalytic cleavage</keyword>
<keyword id="KW-0167">Capsid protein</keyword>
<keyword id="KW-0191">Covalent protein-RNA linkage</keyword>
<keyword id="KW-0235">DNA replication</keyword>
<keyword id="KW-1262">Eukaryotic host gene expression shutoff by virus</keyword>
<keyword id="KW-1193">Eukaryotic host translation shutoff by virus</keyword>
<keyword id="KW-0347">Helicase</keyword>
<keyword id="KW-1035">Host cytoplasm</keyword>
<keyword id="KW-1036">Host cytoplasmic vesicle</keyword>
<keyword id="KW-1190">Host gene expression shutoff by virus</keyword>
<keyword id="KW-1043">Host membrane</keyword>
<keyword id="KW-1192">Host mRNA suppression by virus</keyword>
<keyword id="KW-1048">Host nucleus</keyword>
<keyword id="KW-0945">Host-virus interaction</keyword>
<keyword id="KW-0378">Hydrolase</keyword>
<keyword id="KW-1090">Inhibition of host innate immune response by virus</keyword>
<keyword id="KW-1099">Inhibition of host mRNA nuclear export by virus</keyword>
<keyword id="KW-1088">Inhibition of host RIG-I by virus</keyword>
<keyword id="KW-1113">Inhibition of host RLR pathway by virus</keyword>
<keyword id="KW-0407">Ion channel</keyword>
<keyword id="KW-0406">Ion transport</keyword>
<keyword id="KW-0449">Lipoprotein</keyword>
<keyword id="KW-0460">Magnesium</keyword>
<keyword id="KW-0472">Membrane</keyword>
<keyword id="KW-0479">Metal-binding</keyword>
<keyword id="KW-0519">Myristate</keyword>
<keyword id="KW-0547">Nucleotide-binding</keyword>
<keyword id="KW-0548">Nucleotidyltransferase</keyword>
<keyword id="KW-0597">Phosphoprotein</keyword>
<keyword id="KW-1172">Pore-mediated penetration of viral genome into host cell</keyword>
<keyword id="KW-0645">Protease</keyword>
<keyword id="KW-0677">Repeat</keyword>
<keyword id="KW-0694">RNA-binding</keyword>
<keyword id="KW-0696">RNA-directed RNA polymerase</keyword>
<keyword id="KW-1143">T=pseudo3 icosahedral capsid protein</keyword>
<keyword id="KW-0788">Thiol protease</keyword>
<keyword id="KW-0808">Transferase</keyword>
<keyword id="KW-0813">Transport</keyword>
<keyword id="KW-1161">Viral attachment to host cell</keyword>
<keyword id="KW-0899">Viral immunoevasion</keyword>
<keyword id="KW-1182">Viral ion channel</keyword>
<keyword id="KW-1162">Viral penetration into host cytoplasm</keyword>
<keyword id="KW-0693">Viral RNA replication</keyword>
<keyword id="KW-0946">Virion</keyword>
<keyword id="KW-1164">Virus endocytosis by host</keyword>
<keyword id="KW-1160">Virus entry into host cell</keyword>
<keyword id="KW-0862">Zinc</keyword>
<keyword id="KW-0863">Zinc-finger</keyword>
<organism>
    <name type="scientific">Coxsackievirus B4 (strain JVB / Benschoten / New York/51)</name>
    <dbReference type="NCBI Taxonomy" id="103906"/>
    <lineage>
        <taxon>Viruses</taxon>
        <taxon>Riboviria</taxon>
        <taxon>Orthornavirae</taxon>
        <taxon>Pisuviricota</taxon>
        <taxon>Pisoniviricetes</taxon>
        <taxon>Picornavirales</taxon>
        <taxon>Picornaviridae</taxon>
        <taxon>Ensavirinae</taxon>
        <taxon>Enterovirus</taxon>
        <taxon>Enterovirus B</taxon>
    </lineage>
</organism>
<organismHost>
    <name type="scientific">Homo sapiens</name>
    <name type="common">Human</name>
    <dbReference type="NCBI Taxonomy" id="9606"/>
</organismHost>
<protein>
    <recommendedName>
        <fullName>Genome polyprotein</fullName>
    </recommendedName>
    <component>
        <recommendedName>
            <fullName>P1</fullName>
        </recommendedName>
    </component>
    <component>
        <recommendedName>
            <fullName>Capsid protein VP0</fullName>
        </recommendedName>
        <alternativeName>
            <fullName>VP4-VP2</fullName>
        </alternativeName>
    </component>
    <component>
        <recommendedName>
            <fullName>Capsid protein VP4</fullName>
        </recommendedName>
        <alternativeName>
            <fullName>P1A</fullName>
        </alternativeName>
        <alternativeName>
            <fullName>Virion protein 4</fullName>
        </alternativeName>
    </component>
    <component>
        <recommendedName>
            <fullName>Capsid protein VP2</fullName>
        </recommendedName>
        <alternativeName>
            <fullName>P1B</fullName>
        </alternativeName>
        <alternativeName>
            <fullName>Virion protein 2</fullName>
        </alternativeName>
    </component>
    <component>
        <recommendedName>
            <fullName>Capsid protein VP3</fullName>
        </recommendedName>
        <alternativeName>
            <fullName>P1C</fullName>
        </alternativeName>
        <alternativeName>
            <fullName>Virion protein 3</fullName>
        </alternativeName>
    </component>
    <component>
        <recommendedName>
            <fullName>Capsid protein VP1</fullName>
        </recommendedName>
        <alternativeName>
            <fullName>P1D</fullName>
        </alternativeName>
        <alternativeName>
            <fullName>Virion protein 1</fullName>
        </alternativeName>
    </component>
    <component>
        <recommendedName>
            <fullName>P2</fullName>
        </recommendedName>
    </component>
    <component>
        <recommendedName>
            <fullName>Protease 2A</fullName>
            <shortName>P2A</shortName>
            <ecNumber evidence="3">3.4.22.29</ecNumber>
        </recommendedName>
        <alternativeName>
            <fullName>Picornain 2A</fullName>
        </alternativeName>
        <alternativeName>
            <fullName>Protein 2A</fullName>
        </alternativeName>
    </component>
    <component>
        <recommendedName>
            <fullName>Protein 2B</fullName>
            <shortName>P2B</shortName>
        </recommendedName>
    </component>
    <component>
        <recommendedName>
            <fullName>Protein 2C</fullName>
            <shortName>P2C</shortName>
            <ecNumber evidence="3">3.6.1.15</ecNumber>
        </recommendedName>
    </component>
    <component>
        <recommendedName>
            <fullName>P3</fullName>
        </recommendedName>
    </component>
    <component>
        <recommendedName>
            <fullName>Protein 3AB</fullName>
        </recommendedName>
    </component>
    <component>
        <recommendedName>
            <fullName>Protein 3A</fullName>
            <shortName>P3A</shortName>
        </recommendedName>
    </component>
    <component>
        <recommendedName>
            <fullName>Viral protein genome-linked</fullName>
            <shortName>VPg</shortName>
        </recommendedName>
        <alternativeName>
            <fullName>Protein 3B</fullName>
            <shortName>P3B</shortName>
        </alternativeName>
    </component>
    <component>
        <recommendedName>
            <fullName>Protein 3CD</fullName>
            <ecNumber>3.4.22.28</ecNumber>
        </recommendedName>
    </component>
    <component>
        <recommendedName>
            <fullName evidence="13">Protease 3C</fullName>
            <ecNumber evidence="13">3.4.22.28</ecNumber>
        </recommendedName>
        <alternativeName>
            <fullName evidence="13">Picornain 3C</fullName>
            <shortName evidence="13">P3C</shortName>
        </alternativeName>
    </component>
    <component>
        <recommendedName>
            <fullName evidence="11">RNA-directed RNA polymerase</fullName>
            <shortName>RdRp</shortName>
            <ecNumber evidence="11">2.7.7.48</ecNumber>
        </recommendedName>
        <alternativeName>
            <fullName>3D polymerase</fullName>
            <shortName>3Dpol</shortName>
        </alternativeName>
        <alternativeName>
            <fullName>Protein 3D</fullName>
            <shortName>3D</shortName>
        </alternativeName>
    </component>
</protein>
<sequence>MGAQVSTQKTGAHETSLSASGNSIIHYTNINYYKDAASNSANRQDFTQDPSKFTEPVKDVMIKSLPALNSPTVEECGYSDRVRSITLGNSTITTQECANVVVGYGVWPDYLSDEEATAEDQPTQPDVATCRFYTLNSVKWEMQSAGWWWKFPDALSEMGLFGQNMQYHYLGRSGYTIHVQCNASKFHQGCLLVVCVPEAEMGCTNAENAPAYGDLCGGETAKSFEQNAATGKTAVQTAVCNAGMGVGVGNLTIYPHQWINLRTNNSATIVMPYINSVPMDNMFRHNNFTLMIIPFAPLDYVTGASSYIPITVTVAPMSAEYNGLRLAGHQGLPTMLTPGSTQFLTSDDFQSPSAMPQFDVTPEMNIPGQVRNLMEIAEVDSVVPINNLKANLMTMEAYRVQVRSTDEMGGQIFGFPLQPGASSVLQRTLLGEILNYYTHWSGSLKLTFVFCGSAMATGKFLLAYSPPGAGAPDSRKNAMLGTHVIWDVGLQSSCVLCVPWISQTHYRYVVDDKYTASGFISCWYQTNVIVPAEAQKSCYIMCFVSACNDFSVRMLRDTQFIKQTNFYQGPTEESVERAMGRVADTIARGPSNSEQIPALTAVETGHTSQVDPSDTMQTRHVHNYHSRSESSIENFLCRSACVIYIKYSSAESNNLKRYAEWVINTRQVAQLRRKMEMFTYIRCDMELTFVITSHQEMSTATNSDVPVQTHQIMYVPPGGPVPTSVNDYVWQTSTNPSIFWTEGNAPPRMSIPFMSIGNAYTMFYDGWSNFSRDGIYGYNSLNNMGTIYARHVNDSSPGGLTSTIRIYFKPKHVKAYVPRPPRLCQYKKAKSVNFDVEAVTAERASLITTGPYGHQSGAVYVGNYKVVNRHLATHVDWQNCVWEDYNRDLLVSTTTAHGCDTIARCQCTTGVYFCASKSKHYPVSFEGPGLVEVQESEYYPKRYQSHVLLATGFSEPGDCGGILRCEHGVIGLVTMGGEGVVGFADVRDLLWLEDDAMEQGVKDYVEQLGNAFGSGFTNQICEQVNLLKESLVGQDSILEKSLKALVKIISALVIVVRNHDDLITVTATLALIGCTSSPWRWLKHKVSQYYGIPMAERQNNGWLKKFTEMTNACKGMEWIAVKIQKFIEWLKVKILPEVKEKHEFLSRLKQLPLLESQIATIEQSAPSQSDQEQLFSNVQYFAHYCRKYAPLYAAEAKRVFSLEKKMSNYIQFKSKCRIEPVCLLLHGSPGAGKSVATNLIGRSLAEKLNSSVYSLPPDPDHFDGYKQQAVVIMDDLCQNPDGKDVSLFCQMVSSVDFVPPMAALEEKGILFTSPFVLASTNAGSINAPTVSDSRALARRFHFDMNIEVISMYSQNGKINMPMSVKTCDEECCPVNFKRCCPLVCGKAIQFIDRKTQVRYSLDMLVTEMFREYNHRHSVGATLEALFQGPPVYREIKISVTPETPPPPVIADLLKSVDRQAIREYCKEKGWLVPEIDSILQIEKHVSRAFICLQALTTFVSVAGIIYIIYKLFAGFQGAYTGMPNQKPKVPTLRQAKVQGPAFEFAVAMMKRNSSTVKTEYGEFTMLGIYDRWAVLPRHAKPGPTILMNDQEVGVLDAKELIDRDGTNLELTLLKLNRNEKFRDIRGFLAKEEVEVNEAVLAINTSKFPNMYIPVGRVTDYGFLNLGGTPTKRMLMYNFPTRAGQCGGVLMSTGKVLGIHVGGNGHQGFSAGLLKHYFNDEQGEIEFIESSKDAGFPVINTPSRTKLEPSVFHHVFEGNKEPAVLRNGDPRLKVNFEEAIFFKYIGNVNTHVDEYMLEAVDHYAGQLATLDINTEPMKLEDAVYGTEGLEALDLTTSAGYPYVALGIKKRDILSKKTKDLTKLKECMDKYGLNLPMVTYVKDELRSAEKVAKGKSRLIEASSLNDSVAMRQTFGNLYKAFHLNPGIVTGSAVGCDPDVFWSKIPVMLDGHLIAFDYSGYDASLSPVWFACLKLLLEKLGYTHKETNYIDYLCNSHHLYRDKHYFVRGGMPSGCSGTSIFNSMINNIIIRTLMLKVYKGIDLDQFRMIAYGDDVIASYPWPIDASLLAEAGKDYGLIMTPADKGECFNEVTWTNVTFLKRYFRADEQYPFLVHPVMPMKDIHESIRWTKDPKNTQDHVRSLCLLAWHNGEHEYEEFIQKIRSVPVGRCLTLPAFSTLRRKWLDSF</sequence>
<reference key="1">
    <citation type="journal article" date="1987" name="J. Gen. Virol.">
        <title>The complete nucleotide sequence of coxsackievirus B4 and its comparison to other members of the Picornaviridae.</title>
        <authorList>
            <person name="Jenkins O."/>
            <person name="Booth J.D."/>
            <person name="Minor P.D."/>
            <person name="Almond J.W."/>
        </authorList>
    </citation>
    <scope>NUCLEOTIDE SEQUENCE [GENOMIC RNA]</scope>
</reference>
<reference key="2">
    <citation type="journal article" date="2000" name="Virology">
        <title>The coxsackie-adenovirus receptor (CAR) is used by reference strains and clinical isolates representing all six serotypes of coxsackievirus group B and by swine vesicular disease virus.</title>
        <authorList>
            <person name="Martino T.A."/>
            <person name="Petric M."/>
            <person name="Weingartl H."/>
            <person name="Bergelson J.M."/>
            <person name="Opavsky M.A."/>
            <person name="Richardson C.D."/>
            <person name="Modlin J.F."/>
            <person name="Finberg R.W."/>
            <person name="Kain K.C."/>
            <person name="Willis N."/>
            <person name="Gauntt C.J."/>
            <person name="Liu P.P."/>
        </authorList>
    </citation>
    <scope>INTERACTION WITH HOST CXADR (CAPSID PROTEIN VP1)</scope>
</reference>
<comment type="function">
    <molecule>Capsid protein VP1</molecule>
    <text evidence="3 16">Forms an icosahedral capsid of pseudo T=3 symmetry with capsid proteins VP2 and VP3 (By similarity). The capsid is 300 Angstroms in diameter, composed of 60 copies of each capsid protein and enclosing the viral positive strand RNA genome (By similarity). Capsid protein VP1 mainly forms the vertices of the capsid (By similarity). Capsid protein VP1 interacts with host CXADR to provide virion attachment to target host cells (Probable). This attachment induces virion internalization (By similarity). Tyrosine kinases are probably involved in the entry process (By similarity). After binding to its receptor, the capsid undergoes conformational changes (By similarity). Capsid protein VP1 N-terminus (that contains an amphipathic alpha-helix) and capsid protein VP4 are externalized (By similarity). Together, they shape a pore in the host membrane through which viral genome is translocated to host cell cytoplasm (By similarity).</text>
</comment>
<comment type="function">
    <molecule>Capsid protein VP2</molecule>
    <text evidence="3">Forms an icosahedral capsid of pseudo T=3 symmetry with capsid proteins VP2 and VP3 (By similarity). The capsid is 300 Angstroms in diameter, composed of 60 copies of each capsid protein and enclosing the viral positive strand RNA genome (By similarity).</text>
</comment>
<comment type="function">
    <molecule>Capsid protein VP3</molecule>
    <text evidence="3">Forms an icosahedral capsid of pseudo T=3 symmetry with capsid proteins VP2 and VP3 (By similarity). The capsid is 300 Angstroms in diameter, composed of 60 copies of each capsid protein and enclosing the viral positive strand RNA genome (By similarity).</text>
</comment>
<comment type="function">
    <molecule>Capsid protein VP4</molecule>
    <text evidence="3">Lies on the inner surface of the capsid shell (By similarity). After binding to the host receptor, the capsid undergoes conformational changes (By similarity). Capsid protein VP4 is released, Capsid protein VP1 N-terminus is externalized, and together, they shape a pore in the host membrane through which the viral genome is translocated into the host cell cytoplasm (By similarity).</text>
</comment>
<comment type="function">
    <molecule>Capsid protein VP0</molecule>
    <text evidence="3">Component of immature procapsids, which is cleaved into capsid proteins VP4 and VP2 after maturation (By similarity). Allows the capsid to remain inactive before the maturation step (By similarity).</text>
</comment>
<comment type="function">
    <molecule>Protease 2A</molecule>
    <text evidence="3 6">Cysteine protease that cleaves viral polyprotein and specific host proteins (By similarity). It is responsible for the autocatalytic cleavage between the P1 and P2 regions, which is the first cleavage occurring in the polyprotein (By similarity). Also cleaves the host translation initiation factor EIF4G1, in order to shut down the capped cellular mRNA translation (By similarity). Inhibits the host nucleus-cytoplasm protein and RNA trafficking by cleaving host members of the nuclear pores (By similarity). Counteracts stress granule formation probably by antagonizing its assembly or promoting its dissassembly (By similarity). Cleaves and inhibits host IFIH1/MDA5, thereby inhibiting the type-I IFN production and the establishment of the antiviral state (By similarity). Cleaves and inhibits host MAVS, thereby inhibiting the type-I IFN production and the establishment of the antiviral state (By similarity).</text>
</comment>
<comment type="function">
    <molecule>Protein 2B</molecule>
    <text evidence="3">Plays an essential role in the virus replication cycle by acting as a viroporin. Creates a pore in the host endoplasmic reticulum and as a consequence releases Ca2+ in the cytoplasm of infected cell. In turn, high levels of cytoplasmic calcium may trigger membrane trafficking and transport of viral ER-associated proteins to viroplasms, sites of viral genome replication.</text>
</comment>
<comment type="function">
    <molecule>Protein 2C</molecule>
    <text evidence="3">Induces and associates with structural rearrangements of intracellular membranes. Displays RNA-binding, nucleotide binding and NTPase activities. May play a role in virion morphogenesis and viral RNA encapsidation by interacting with the capsid protein VP3.</text>
</comment>
<comment type="function">
    <molecule>Protein 3AB</molecule>
    <text evidence="3">Localizes the viral replication complex to the surface of membranous vesicles. Together with protein 3CD binds the Cis-Active RNA Element (CRE) which is involved in RNA synthesis initiation. Acts as a cofactor to stimulate the activity of 3D polymerase, maybe through a nucleid acid chaperone activity.</text>
</comment>
<comment type="function">
    <molecule>Protein 3A</molecule>
    <text evidence="3 6">Localizes the viral replication complex to the surface of membranous vesicles (By similarity). It inhibits host cell endoplasmic reticulum-to-Golgi apparatus transport and causes the disassembly of the Golgi complex, possibly through GBF1 interaction (By similarity). This would result in depletion of MHC, trail receptors and IFN receptors at the host cell surface (By similarity). Plays an essential role in viral RNA replication by recruiting ACBD3 and PI4KB at the viral replication sites, thereby allowing the formation of the rearranged membranous structures where viral replication takes place (By similarity).</text>
</comment>
<comment type="function">
    <molecule>Viral protein genome-linked</molecule>
    <text evidence="3">Acts as a primer for viral RNA replication and remains covalently bound to viral genomic RNA. VPg is uridylylated prior to priming replication into VPg-pUpU. The oriI viral genomic sequence may act as a template for this. The VPg-pUpU is then used as primer on the genomic RNA poly(A) by the RNA-dependent RNA polymerase to replicate the viral genome. During genome replication, the VPg-RNA linkage is removed by the host TDP2, thereby accelerating replication. During the late stage of the replication cycle, host TDP2 is excluded from sites of viral RNA synthesis and encapsidation, allowing for the generation of progeny virions.</text>
</comment>
<comment type="function">
    <molecule>Protein 3CD</molecule>
    <text evidence="3">Involved in the viral replication complex and viral polypeptide maturation. It exhibits protease activity with a specificity and catalytic efficiency that is different from protease 3C. Protein 3CD lacks polymerase activity. Protein 3CD binds to the 5'UTR of the viral genome.</text>
</comment>
<comment type="function">
    <molecule>RNA-directed RNA polymerase</molecule>
    <text evidence="3">Replicates the viral genomic RNA on the surface of intracellular membranes. May form linear arrays of subunits that propagate along a strong head-to-tail interaction called interface-I. Covalently attaches UMP to a tyrosine of VPg, which is used to prime RNA synthesis. The positive stranded RNA genome is first replicated at virus induced membranous vesicles, creating a dsRNA genomic replication form. This dsRNA is then used as template to synthesize positive stranded RNA genomes. ss(+)RNA genomes are either translated, replicated or encapsidated.</text>
</comment>
<comment type="function">
    <molecule>Protease 3C</molecule>
    <text evidence="3 5">Major viral protease that mediates proteolytic processing of the polyprotein (By similarity). Cleaves host EIF5B, contributing to host translation shutoff (By similarity). Also cleaves host PABPC1, contributing to host translation shutoff (By similarity). Cleaves host NLRP1, triggers host N-glycine-mediated degradation of the autoinhibitory NLRP1 N-terminal fragment (By similarity).</text>
</comment>
<comment type="catalytic activity">
    <molecule>Protein 2C</molecule>
    <reaction evidence="3">
        <text>a ribonucleoside 5'-triphosphate + H2O = a ribonucleoside 5'-diphosphate + phosphate + H(+)</text>
        <dbReference type="Rhea" id="RHEA:23680"/>
        <dbReference type="ChEBI" id="CHEBI:15377"/>
        <dbReference type="ChEBI" id="CHEBI:15378"/>
        <dbReference type="ChEBI" id="CHEBI:43474"/>
        <dbReference type="ChEBI" id="CHEBI:57930"/>
        <dbReference type="ChEBI" id="CHEBI:61557"/>
        <dbReference type="EC" id="3.6.1.15"/>
    </reaction>
</comment>
<comment type="catalytic activity">
    <molecule>Protease 2A</molecule>
    <reaction evidence="3">
        <text>Selective cleavage of Tyr-|-Gly bond in the picornavirus polyprotein.</text>
        <dbReference type="EC" id="3.4.22.29"/>
    </reaction>
</comment>
<comment type="catalytic activity">
    <molecule>RNA-directed RNA polymerase</molecule>
    <reaction evidence="11">
        <text>RNA(n) + a ribonucleoside 5'-triphosphate = RNA(n+1) + diphosphate</text>
        <dbReference type="Rhea" id="RHEA:21248"/>
        <dbReference type="Rhea" id="RHEA-COMP:14527"/>
        <dbReference type="Rhea" id="RHEA-COMP:17342"/>
        <dbReference type="ChEBI" id="CHEBI:33019"/>
        <dbReference type="ChEBI" id="CHEBI:61557"/>
        <dbReference type="ChEBI" id="CHEBI:140395"/>
        <dbReference type="EC" id="2.7.7.48"/>
    </reaction>
</comment>
<comment type="catalytic activity">
    <molecule>Protease 3C</molecule>
    <reaction evidence="13">
        <text>Selective cleavage of Gln-|-Gly bond in the poliovirus polyprotein. In other picornavirus reactions Glu may be substituted for Gln, and Ser or Thr for Gly.</text>
        <dbReference type="EC" id="3.4.22.28"/>
    </reaction>
</comment>
<comment type="cofactor">
    <molecule>RNA-directed RNA polymerase</molecule>
    <cofactor evidence="3">
        <name>Mg(2+)</name>
        <dbReference type="ChEBI" id="CHEBI:18420"/>
    </cofactor>
    <text evidence="3 6">Binds 2 magnesium ions that constitute a dinuclear catalytic metal center (By similarity). The magnesium ions are not prebound but only present for catalysis (By similarity). Requires the presence of 3CDpro or 3CPro (By similarity).</text>
</comment>
<comment type="activity regulation">
    <molecule>RNA-directed RNA polymerase</molecule>
    <text evidence="3">Replication or transcription is subject to high level of random mutations by the nucleotide analog ribavirin.</text>
</comment>
<comment type="subunit">
    <molecule>Capsid protein VP0</molecule>
    <text evidence="3">Interacts with capsid protein VP1 and capsid protein VP3 to form heterotrimeric protomers.</text>
</comment>
<comment type="subunit">
    <molecule>Capsid protein VP1</molecule>
    <text evidence="3 14">Interacts with capsid protein VP0, and capsid protein VP3 to form heterotrimeric protomers (By similarity). Five protomers subsequently associate to form pentamers which serve as building blocks for the capsid (By similarity). Interacts with capsid protein VP2, capsid protein VP3 and capsid protein VP4 following cleavage of capsid protein VP0 (By similarity). Interacts with host CXADR (PubMed:10814575).</text>
</comment>
<comment type="subunit">
    <molecule>Capsid protein VP2</molecule>
    <text evidence="3">Interacts with capsid protein VP1 and capsid protein VP3 in the mature capsid.</text>
</comment>
<comment type="subunit">
    <molecule>Capsid protein VP3</molecule>
    <text evidence="3">Interacts with capsid protein VP0 and capsid protein VP1 to form heterotrimeric protomers (By similarity). Five protomers subsequently associate to form pentamers which serve as building blocks for the capsid (By similarity). Interacts with capsid protein VP4 in the mature capsid (By similarity). Interacts with protein 2C; this interaction may be important for virion morphogenesis (By similarity).</text>
</comment>
<comment type="subunit">
    <molecule>Capsid protein VP4</molecule>
    <text evidence="3">Interacts with capsid protein VP1 and capsid protein VP3.</text>
</comment>
<comment type="subunit">
    <molecule>Protease 2A</molecule>
    <text evidence="7">Homodimer.</text>
</comment>
<comment type="subunit">
    <molecule>Protein 2C</molecule>
    <text evidence="3">Homohexamer; forms a hexameric ring structure with 6-fold symmetry characteristic of AAA+ ATPases (By similarity). Interacts (via N-terminus) with host RTN3 (via reticulon domain); this interaction is important for viral replication (By similarity). Interacts with capsid protein VP3; this interaction may be important for virion morphogenesis (By similarity).</text>
</comment>
<comment type="subunit">
    <molecule>Protein 3AB</molecule>
    <text evidence="3">Interacts with protein 3CD.</text>
</comment>
<comment type="subunit">
    <molecule>Protein 3A</molecule>
    <text evidence="3 6">Homodimer (By similarity). Interacts with host GBF1 (By similarity). Interacts (via GOLD domain) with host ACBD3 (via GOLD domain); this interaction allows the formation of a viral protein 3A/ACBD3 heterotetramer with a 2:2 stoichiometry, which will stimulate the recruitment of host PI4KB in order to synthesize PI4P at the viral RNA replication sites (By similarity).</text>
</comment>
<comment type="subunit">
    <molecule>Viral protein genome-linked</molecule>
    <text evidence="3">Interacts with RNA-directed RNA polymerase.</text>
</comment>
<comment type="subunit">
    <molecule>Protein 3CD</molecule>
    <text evidence="3">Interacts with protein 3AB and with RNA-directed RNA polymerase.</text>
</comment>
<comment type="subunit">
    <molecule>RNA-directed RNA polymerase</molecule>
    <text evidence="3">Interacts with Viral protein genome-linked and with protein 3CD.</text>
</comment>
<comment type="subcellular location">
    <molecule>Capsid protein VP0</molecule>
    <subcellularLocation>
        <location>Virion</location>
    </subcellularLocation>
    <subcellularLocation>
        <location evidence="15">Host cytoplasm</location>
    </subcellularLocation>
</comment>
<comment type="subcellular location">
    <molecule>Capsid protein VP4</molecule>
    <subcellularLocation>
        <location>Virion</location>
    </subcellularLocation>
</comment>
<comment type="subcellular location">
    <molecule>Capsid protein VP2</molecule>
    <subcellularLocation>
        <location evidence="3">Virion</location>
    </subcellularLocation>
    <subcellularLocation>
        <location evidence="15">Host cytoplasm</location>
    </subcellularLocation>
</comment>
<comment type="subcellular location">
    <molecule>Capsid protein VP3</molecule>
    <subcellularLocation>
        <location evidence="3">Virion</location>
    </subcellularLocation>
    <subcellularLocation>
        <location evidence="15">Host cytoplasm</location>
    </subcellularLocation>
</comment>
<comment type="subcellular location">
    <molecule>Capsid protein VP1</molecule>
    <subcellularLocation>
        <location evidence="3">Virion</location>
    </subcellularLocation>
    <subcellularLocation>
        <location evidence="15">Host cytoplasm</location>
    </subcellularLocation>
</comment>
<comment type="subcellular location">
    <molecule>Protein 2B</molecule>
    <subcellularLocation>
        <location evidence="15">Host cytoplasmic vesicle membrane</location>
        <topology evidence="15">Peripheral membrane protein</topology>
        <orientation evidence="15">Cytoplasmic side</orientation>
    </subcellularLocation>
    <text>Probably localizes to the surface of intracellular membrane vesicles that are induced after virus infection as the site for viral RNA replication. These vesicles are derived from the endoplasmic reticulum.</text>
</comment>
<comment type="subcellular location">
    <molecule>Protein 2C</molecule>
    <subcellularLocation>
        <location evidence="15">Host cytoplasmic vesicle membrane</location>
        <topology evidence="15">Peripheral membrane protein</topology>
        <orientation evidence="15">Cytoplasmic side</orientation>
    </subcellularLocation>
    <text>Probably localizes to the surface of intracellular membrane vesicles that are induced after virus infection as the site for viral RNA replication. These vesicles are derived from the endoplasmic reticulum.</text>
</comment>
<comment type="subcellular location">
    <molecule>Protein 3A</molecule>
    <subcellularLocation>
        <location evidence="15">Host cytoplasmic vesicle membrane</location>
        <topology evidence="15">Peripheral membrane protein</topology>
        <orientation evidence="15">Cytoplasmic side</orientation>
    </subcellularLocation>
    <text>Probably localizes to the surface of intracellular membrane vesicles that are induced after virus infection as the site for viral RNA replication. These vesicles are derived from the endoplasmic reticulum.</text>
</comment>
<comment type="subcellular location">
    <molecule>Protein 3AB</molecule>
    <subcellularLocation>
        <location evidence="15">Host cytoplasmic vesicle membrane</location>
        <topology evidence="15">Peripheral membrane protein</topology>
        <orientation evidence="15">Cytoplasmic side</orientation>
    </subcellularLocation>
    <text>Probably localizes to the surface of intracellular membrane vesicles that are induced after virus infection as the site for viral RNA replication. These vesicles are derived from the endoplasmic reticulum.</text>
</comment>
<comment type="subcellular location">
    <molecule>Viral protein genome-linked</molecule>
    <subcellularLocation>
        <location evidence="3">Virion</location>
    </subcellularLocation>
    <subcellularLocation>
        <location evidence="8">Host cytoplasm</location>
    </subcellularLocation>
</comment>
<comment type="subcellular location">
    <molecule>Protease 3C</molecule>
    <subcellularLocation>
        <location>Host cytoplasm</location>
    </subcellularLocation>
</comment>
<comment type="subcellular location">
    <molecule>Protein 3CD</molecule>
    <subcellularLocation>
        <location evidence="3">Host nucleus</location>
    </subcellularLocation>
    <subcellularLocation>
        <location evidence="3">Host cytoplasm</location>
    </subcellularLocation>
    <subcellularLocation>
        <location evidence="15">Host cytoplasmic vesicle membrane</location>
        <topology evidence="15">Peripheral membrane protein</topology>
        <orientation evidence="15">Cytoplasmic side</orientation>
    </subcellularLocation>
    <text>Probably localizes to the surface of intracellular membrane vesicles that are induced after virus infection as the site for viral RNA replication. These vesicles are derived from the endoplasmic reticulum.</text>
</comment>
<comment type="subcellular location">
    <molecule>RNA-directed RNA polymerase</molecule>
    <subcellularLocation>
        <location evidence="15">Host cytoplasmic vesicle membrane</location>
        <topology evidence="15">Peripheral membrane protein</topology>
        <orientation evidence="15">Cytoplasmic side</orientation>
    </subcellularLocation>
    <text>Probably localizes to the surface of intracellular membrane vesicles that are induced after virus infection as the site for viral RNA replication. These vesicles are derived from the endoplasmic reticulum.</text>
</comment>
<comment type="domain">
    <molecule>Protein 2C</molecule>
    <text evidence="2 3">The N-terminus has membrane-binding (By similarity). The N-terminus also displays RNA-binding properties (By similarity). The N-terminus is involved in oligomerization (By similarity). The central part contains an ATPase domain and a degenerate C4-type zinc-finger with only 3 cysteines (By similarity). The C-terminus is involved in RNA-binding (By similarity). The extreme C-terminus contains a region involved in oligomerization (By similarity).</text>
</comment>
<comment type="PTM">
    <molecule>Genome polyprotein</molecule>
    <text evidence="3">Specific enzymatic cleavages in vivo by the viral proteases yield processing intermediates and the mature proteins.</text>
</comment>
<comment type="PTM">
    <molecule>Capsid protein VP0</molecule>
    <text evidence="3">Myristoylation is required for the formation of pentamers during virus assembly. Further assembly of 12 pentamers and a molecule of genomic RNA generates the provirion.</text>
</comment>
<comment type="PTM">
    <molecule>Capsid protein VP0</molecule>
    <text evidence="3">During virion maturation, immature virions are rendered infectious following cleavage of VP0 into VP4 and VP2. This maturation seems to be an autocatalytic event triggered by the presence of RNA in the capsid and it is followed by a conformational change infectious virion.</text>
</comment>
<comment type="PTM">
    <molecule>Capsid protein VP4</molecule>
    <text evidence="3">Myristoylation is required during RNA encapsidation and formation of the mature virus particle.</text>
</comment>
<comment type="PTM">
    <molecule>Viral protein genome-linked</molecule>
    <text evidence="3">VPg is uridylylated by the polymerase into VPg-pUpU. This acts as a nucleotide-peptide primer for the genomic RNA replication.</text>
</comment>
<comment type="similarity">
    <text evidence="15">Belongs to the picornaviruses polyprotein family.</text>
</comment>
<accession>P08292</accession>
<dbReference type="EC" id="3.4.22.29" evidence="3"/>
<dbReference type="EC" id="3.6.1.15" evidence="3"/>
<dbReference type="EC" id="3.4.22.28" evidence="13"/>
<dbReference type="EC" id="2.7.7.48" evidence="11"/>
<dbReference type="EMBL" id="X05690">
    <property type="protein sequence ID" value="CAA29172.1"/>
    <property type="molecule type" value="Genomic_RNA"/>
</dbReference>
<dbReference type="PDB" id="1Z8R">
    <property type="method" value="NMR"/>
    <property type="chains" value="A=842-999"/>
</dbReference>
<dbReference type="PDBsum" id="1Z8R"/>
<dbReference type="SMR" id="P08292"/>
<dbReference type="MEROPS" id="C03.011"/>
<dbReference type="MEROPS" id="C03.020"/>
<dbReference type="MEROPS" id="N08.001"/>
<dbReference type="EvolutionaryTrace" id="P08292"/>
<dbReference type="Proteomes" id="UP000007531">
    <property type="component" value="Segment"/>
</dbReference>
<dbReference type="GO" id="GO:0044162">
    <property type="term" value="C:host cell cytoplasmic vesicle membrane"/>
    <property type="evidence" value="ECO:0007669"/>
    <property type="project" value="UniProtKB-SubCell"/>
</dbReference>
<dbReference type="GO" id="GO:0042025">
    <property type="term" value="C:host cell nucleus"/>
    <property type="evidence" value="ECO:0007669"/>
    <property type="project" value="UniProtKB-SubCell"/>
</dbReference>
<dbReference type="GO" id="GO:0016020">
    <property type="term" value="C:membrane"/>
    <property type="evidence" value="ECO:0007669"/>
    <property type="project" value="UniProtKB-KW"/>
</dbReference>
<dbReference type="GO" id="GO:0039618">
    <property type="term" value="C:T=pseudo3 icosahedral viral capsid"/>
    <property type="evidence" value="ECO:0007669"/>
    <property type="project" value="UniProtKB-KW"/>
</dbReference>
<dbReference type="GO" id="GO:0005524">
    <property type="term" value="F:ATP binding"/>
    <property type="evidence" value="ECO:0007669"/>
    <property type="project" value="UniProtKB-KW"/>
</dbReference>
<dbReference type="GO" id="GO:0016887">
    <property type="term" value="F:ATP hydrolysis activity"/>
    <property type="evidence" value="ECO:0007669"/>
    <property type="project" value="InterPro"/>
</dbReference>
<dbReference type="GO" id="GO:0015267">
    <property type="term" value="F:channel activity"/>
    <property type="evidence" value="ECO:0007669"/>
    <property type="project" value="UniProtKB-KW"/>
</dbReference>
<dbReference type="GO" id="GO:0004197">
    <property type="term" value="F:cysteine-type endopeptidase activity"/>
    <property type="evidence" value="ECO:0007669"/>
    <property type="project" value="UniProtKB-EC"/>
</dbReference>
<dbReference type="GO" id="GO:0003723">
    <property type="term" value="F:RNA binding"/>
    <property type="evidence" value="ECO:0007669"/>
    <property type="project" value="UniProtKB-KW"/>
</dbReference>
<dbReference type="GO" id="GO:0003724">
    <property type="term" value="F:RNA helicase activity"/>
    <property type="evidence" value="ECO:0007669"/>
    <property type="project" value="InterPro"/>
</dbReference>
<dbReference type="GO" id="GO:0003968">
    <property type="term" value="F:RNA-directed RNA polymerase activity"/>
    <property type="evidence" value="ECO:0007669"/>
    <property type="project" value="UniProtKB-KW"/>
</dbReference>
<dbReference type="GO" id="GO:0005198">
    <property type="term" value="F:structural molecule activity"/>
    <property type="evidence" value="ECO:0007669"/>
    <property type="project" value="InterPro"/>
</dbReference>
<dbReference type="GO" id="GO:0008270">
    <property type="term" value="F:zinc ion binding"/>
    <property type="evidence" value="ECO:0007669"/>
    <property type="project" value="UniProtKB-KW"/>
</dbReference>
<dbReference type="GO" id="GO:0006260">
    <property type="term" value="P:DNA replication"/>
    <property type="evidence" value="ECO:0007669"/>
    <property type="project" value="UniProtKB-KW"/>
</dbReference>
<dbReference type="GO" id="GO:0006351">
    <property type="term" value="P:DNA-templated transcription"/>
    <property type="evidence" value="ECO:0007669"/>
    <property type="project" value="InterPro"/>
</dbReference>
<dbReference type="GO" id="GO:0075509">
    <property type="term" value="P:endocytosis involved in viral entry into host cell"/>
    <property type="evidence" value="ECO:0007669"/>
    <property type="project" value="UniProtKB-KW"/>
</dbReference>
<dbReference type="GO" id="GO:0034220">
    <property type="term" value="P:monoatomic ion transmembrane transport"/>
    <property type="evidence" value="ECO:0007669"/>
    <property type="project" value="UniProtKB-KW"/>
</dbReference>
<dbReference type="GO" id="GO:0006508">
    <property type="term" value="P:proteolysis"/>
    <property type="evidence" value="ECO:0007669"/>
    <property type="project" value="UniProtKB-KW"/>
</dbReference>
<dbReference type="GO" id="GO:0044694">
    <property type="term" value="P:symbiont genome entry into host cell via pore formation in plasma membrane"/>
    <property type="evidence" value="ECO:0007669"/>
    <property type="project" value="UniProtKB-KW"/>
</dbReference>
<dbReference type="GO" id="GO:0039520">
    <property type="term" value="P:symbiont-mediated activation of host autophagy"/>
    <property type="evidence" value="ECO:0000250"/>
    <property type="project" value="UniProtKB"/>
</dbReference>
<dbReference type="GO" id="GO:0039540">
    <property type="term" value="P:symbiont-mediated suppression of host cytoplasmic pattern recognition receptor signaling pathway via inhibition of RIG-I activity"/>
    <property type="evidence" value="ECO:0007669"/>
    <property type="project" value="UniProtKB-KW"/>
</dbReference>
<dbReference type="GO" id="GO:0039522">
    <property type="term" value="P:symbiont-mediated suppression of host mRNA export from nucleus"/>
    <property type="evidence" value="ECO:0007669"/>
    <property type="project" value="UniProtKB-KW"/>
</dbReference>
<dbReference type="GO" id="GO:0039694">
    <property type="term" value="P:viral RNA genome replication"/>
    <property type="evidence" value="ECO:0007669"/>
    <property type="project" value="InterPro"/>
</dbReference>
<dbReference type="GO" id="GO:0019062">
    <property type="term" value="P:virion attachment to host cell"/>
    <property type="evidence" value="ECO:0007669"/>
    <property type="project" value="UniProtKB-KW"/>
</dbReference>
<dbReference type="CDD" id="cd23213">
    <property type="entry name" value="Enterovirus_RdRp"/>
    <property type="match status" value="1"/>
</dbReference>
<dbReference type="CDD" id="cd00205">
    <property type="entry name" value="rhv_like"/>
    <property type="match status" value="3"/>
</dbReference>
<dbReference type="FunFam" id="1.20.960.20:FF:000001">
    <property type="entry name" value="Genome polyprotein"/>
    <property type="match status" value="1"/>
</dbReference>
<dbReference type="FunFam" id="2.40.10.10:FF:000018">
    <property type="entry name" value="Genome polyprotein"/>
    <property type="match status" value="1"/>
</dbReference>
<dbReference type="FunFam" id="2.40.10.10:FF:000020">
    <property type="entry name" value="Genome polyprotein"/>
    <property type="match status" value="1"/>
</dbReference>
<dbReference type="FunFam" id="2.40.10.10:FF:000022">
    <property type="entry name" value="Genome polyprotein"/>
    <property type="match status" value="1"/>
</dbReference>
<dbReference type="FunFam" id="2.60.120.20:FF:000001">
    <property type="entry name" value="Genome polyprotein"/>
    <property type="match status" value="1"/>
</dbReference>
<dbReference type="FunFam" id="2.60.120.20:FF:000002">
    <property type="entry name" value="Genome polyprotein"/>
    <property type="match status" value="1"/>
</dbReference>
<dbReference type="FunFam" id="2.60.120.20:FF:000004">
    <property type="entry name" value="Genome polyprotein"/>
    <property type="match status" value="1"/>
</dbReference>
<dbReference type="FunFam" id="3.30.70.270:FF:000008">
    <property type="entry name" value="Genome polyprotein"/>
    <property type="match status" value="1"/>
</dbReference>
<dbReference type="FunFam" id="4.10.80.10:FF:000001">
    <property type="entry name" value="Genome polyprotein"/>
    <property type="match status" value="1"/>
</dbReference>
<dbReference type="FunFam" id="4.10.880.10:FF:000001">
    <property type="entry name" value="Genome polyprotein"/>
    <property type="match status" value="1"/>
</dbReference>
<dbReference type="FunFam" id="4.10.880.10:FF:000002">
    <property type="entry name" value="Genome polyprotein"/>
    <property type="match status" value="1"/>
</dbReference>
<dbReference type="Gene3D" id="1.20.960.20">
    <property type="match status" value="1"/>
</dbReference>
<dbReference type="Gene3D" id="2.60.120.20">
    <property type="match status" value="3"/>
</dbReference>
<dbReference type="Gene3D" id="3.30.70.270">
    <property type="match status" value="1"/>
</dbReference>
<dbReference type="Gene3D" id="4.10.80.10">
    <property type="entry name" value="Picornavirus coat protein VP4"/>
    <property type="match status" value="1"/>
</dbReference>
<dbReference type="Gene3D" id="6.10.20.20">
    <property type="entry name" value="Poliovirus 3A protein-like"/>
    <property type="match status" value="1"/>
</dbReference>
<dbReference type="Gene3D" id="4.10.880.10">
    <property type="entry name" value="Poliovirus 3D polymerase Domain 1 (Nucleotidyltransferase)"/>
    <property type="match status" value="2"/>
</dbReference>
<dbReference type="Gene3D" id="2.40.10.10">
    <property type="entry name" value="Trypsin-like serine proteases"/>
    <property type="match status" value="4"/>
</dbReference>
<dbReference type="InterPro" id="IPR003593">
    <property type="entry name" value="AAA+_ATPase"/>
</dbReference>
<dbReference type="InterPro" id="IPR043502">
    <property type="entry name" value="DNA/RNA_pol_sf"/>
</dbReference>
<dbReference type="InterPro" id="IPR000605">
    <property type="entry name" value="Helicase_SF3_ssDNA/RNA_vir"/>
</dbReference>
<dbReference type="InterPro" id="IPR014759">
    <property type="entry name" value="Helicase_SF3_ssRNA_vir"/>
</dbReference>
<dbReference type="InterPro" id="IPR027417">
    <property type="entry name" value="P-loop_NTPase"/>
</dbReference>
<dbReference type="InterPro" id="IPR014838">
    <property type="entry name" value="P3A"/>
</dbReference>
<dbReference type="InterPro" id="IPR036203">
    <property type="entry name" value="P3A_soluble_dom"/>
</dbReference>
<dbReference type="InterPro" id="IPR044067">
    <property type="entry name" value="PCV_3C_PRO"/>
</dbReference>
<dbReference type="InterPro" id="IPR000081">
    <property type="entry name" value="Peptidase_C3"/>
</dbReference>
<dbReference type="InterPro" id="IPR000199">
    <property type="entry name" value="Peptidase_C3A/C3B_picornavir"/>
</dbReference>
<dbReference type="InterPro" id="IPR009003">
    <property type="entry name" value="Peptidase_S1_PA"/>
</dbReference>
<dbReference type="InterPro" id="IPR043504">
    <property type="entry name" value="Peptidase_S1_PA_chymotrypsin"/>
</dbReference>
<dbReference type="InterPro" id="IPR003138">
    <property type="entry name" value="Pico_P1A"/>
</dbReference>
<dbReference type="InterPro" id="IPR036988">
    <property type="entry name" value="Pico_P1A_sf"/>
</dbReference>
<dbReference type="InterPro" id="IPR002527">
    <property type="entry name" value="Pico_P2B"/>
</dbReference>
<dbReference type="InterPro" id="IPR001676">
    <property type="entry name" value="Picornavirus_capsid"/>
</dbReference>
<dbReference type="InterPro" id="IPR043128">
    <property type="entry name" value="Rev_trsase/Diguanyl_cyclase"/>
</dbReference>
<dbReference type="InterPro" id="IPR033703">
    <property type="entry name" value="Rhv-like"/>
</dbReference>
<dbReference type="InterPro" id="IPR001205">
    <property type="entry name" value="RNA-dir_pol_C"/>
</dbReference>
<dbReference type="InterPro" id="IPR007094">
    <property type="entry name" value="RNA-dir_pol_PSvirus"/>
</dbReference>
<dbReference type="InterPro" id="IPR029053">
    <property type="entry name" value="Viral_coat"/>
</dbReference>
<dbReference type="Pfam" id="PF08727">
    <property type="entry name" value="P3A"/>
    <property type="match status" value="1"/>
</dbReference>
<dbReference type="Pfam" id="PF00548">
    <property type="entry name" value="Peptidase_C3"/>
    <property type="match status" value="1"/>
</dbReference>
<dbReference type="Pfam" id="PF02226">
    <property type="entry name" value="Pico_P1A"/>
    <property type="match status" value="1"/>
</dbReference>
<dbReference type="Pfam" id="PF00947">
    <property type="entry name" value="Pico_P2A"/>
    <property type="match status" value="1"/>
</dbReference>
<dbReference type="Pfam" id="PF01552">
    <property type="entry name" value="Pico_P2B"/>
    <property type="match status" value="1"/>
</dbReference>
<dbReference type="Pfam" id="PF00680">
    <property type="entry name" value="RdRP_1"/>
    <property type="match status" value="1"/>
</dbReference>
<dbReference type="Pfam" id="PF00073">
    <property type="entry name" value="Rhv"/>
    <property type="match status" value="2"/>
</dbReference>
<dbReference type="Pfam" id="PF22663">
    <property type="entry name" value="Rhv_5"/>
    <property type="match status" value="1"/>
</dbReference>
<dbReference type="Pfam" id="PF00910">
    <property type="entry name" value="RNA_helicase"/>
    <property type="match status" value="1"/>
</dbReference>
<dbReference type="SMART" id="SM00382">
    <property type="entry name" value="AAA"/>
    <property type="match status" value="1"/>
</dbReference>
<dbReference type="SUPFAM" id="SSF56672">
    <property type="entry name" value="DNA/RNA polymerases"/>
    <property type="match status" value="1"/>
</dbReference>
<dbReference type="SUPFAM" id="SSF52540">
    <property type="entry name" value="P-loop containing nucleoside triphosphate hydrolases"/>
    <property type="match status" value="1"/>
</dbReference>
<dbReference type="SUPFAM" id="SSF88633">
    <property type="entry name" value="Positive stranded ssRNA viruses"/>
    <property type="match status" value="2"/>
</dbReference>
<dbReference type="SUPFAM" id="SSF89043">
    <property type="entry name" value="Soluble domain of poliovirus core protein 3a"/>
    <property type="match status" value="1"/>
</dbReference>
<dbReference type="SUPFAM" id="SSF50494">
    <property type="entry name" value="Trypsin-like serine proteases"/>
    <property type="match status" value="2"/>
</dbReference>
<dbReference type="PROSITE" id="PS51874">
    <property type="entry name" value="PCV_3C_PRO"/>
    <property type="match status" value="1"/>
</dbReference>
<dbReference type="PROSITE" id="PS50507">
    <property type="entry name" value="RDRP_SSRNA_POS"/>
    <property type="match status" value="1"/>
</dbReference>
<dbReference type="PROSITE" id="PS51218">
    <property type="entry name" value="SF3_HELICASE_2"/>
    <property type="match status" value="1"/>
</dbReference>
<evidence type="ECO:0000250" key="1"/>
<evidence type="ECO:0000250" key="2">
    <source>
        <dbReference type="UniProtKB" id="B9VUU3"/>
    </source>
</evidence>
<evidence type="ECO:0000250" key="3">
    <source>
        <dbReference type="UniProtKB" id="P03300"/>
    </source>
</evidence>
<evidence type="ECO:0000250" key="4">
    <source>
        <dbReference type="UniProtKB" id="P03301"/>
    </source>
</evidence>
<evidence type="ECO:0000250" key="5">
    <source>
        <dbReference type="UniProtKB" id="P03303"/>
    </source>
</evidence>
<evidence type="ECO:0000250" key="6">
    <source>
        <dbReference type="UniProtKB" id="P03313"/>
    </source>
</evidence>
<evidence type="ECO:0000250" key="7">
    <source>
        <dbReference type="UniProtKB" id="P04936"/>
    </source>
</evidence>
<evidence type="ECO:0000250" key="8">
    <source>
        <dbReference type="UniProtKB" id="Q66478"/>
    </source>
</evidence>
<evidence type="ECO:0000250" key="9">
    <source>
        <dbReference type="UniProtKB" id="Q9QF31"/>
    </source>
</evidence>
<evidence type="ECO:0000255" key="10"/>
<evidence type="ECO:0000255" key="11">
    <source>
        <dbReference type="PROSITE-ProRule" id="PRU00539"/>
    </source>
</evidence>
<evidence type="ECO:0000255" key="12">
    <source>
        <dbReference type="PROSITE-ProRule" id="PRU00551"/>
    </source>
</evidence>
<evidence type="ECO:0000255" key="13">
    <source>
        <dbReference type="PROSITE-ProRule" id="PRU01222"/>
    </source>
</evidence>
<evidence type="ECO:0000269" key="14">
    <source>
    </source>
</evidence>
<evidence type="ECO:0000305" key="15"/>
<evidence type="ECO:0000305" key="16">
    <source>
    </source>
</evidence>
<evidence type="ECO:0007829" key="17">
    <source>
        <dbReference type="PDB" id="1Z8R"/>
    </source>
</evidence>
<name>POLG_CXB4J</name>